<accession>B8DR67</accession>
<proteinExistence type="inferred from homology"/>
<organism>
    <name type="scientific">Nitratidesulfovibrio vulgaris (strain DSM 19637 / Miyazaki F)</name>
    <name type="common">Desulfovibrio vulgaris</name>
    <dbReference type="NCBI Taxonomy" id="883"/>
    <lineage>
        <taxon>Bacteria</taxon>
        <taxon>Pseudomonadati</taxon>
        <taxon>Thermodesulfobacteriota</taxon>
        <taxon>Desulfovibrionia</taxon>
        <taxon>Desulfovibrionales</taxon>
        <taxon>Desulfovibrionaceae</taxon>
        <taxon>Nitratidesulfovibrio</taxon>
    </lineage>
</organism>
<name>MSCL_NITV9</name>
<sequence length="148" mass="15385">MLKAFKEFAVKGNALDMAVGVILGASFGTIVKSLVDDLIMPPIGLVLGGVDFSNLFVTLRDGAAPGPYASLAAAKQAGAVTLNVGVFANTVVSFTIVAFAVFLLVRGVNTLRERLEGPAAPKQQACPFCFSKIDVRATRCPHCTATIG</sequence>
<comment type="function">
    <text evidence="1">Channel that opens in response to stretch forces in the membrane lipid bilayer. May participate in the regulation of osmotic pressure changes within the cell.</text>
</comment>
<comment type="subunit">
    <text evidence="1">Homopentamer.</text>
</comment>
<comment type="subcellular location">
    <subcellularLocation>
        <location evidence="1">Cell inner membrane</location>
        <topology evidence="1">Multi-pass membrane protein</topology>
    </subcellularLocation>
</comment>
<comment type="similarity">
    <text evidence="1">Belongs to the MscL family.</text>
</comment>
<reference key="1">
    <citation type="submission" date="2008-10" db="EMBL/GenBank/DDBJ databases">
        <title>Complete sequence of Desulfovibrio vulgaris str. 'Miyazaki F'.</title>
        <authorList>
            <person name="Lucas S."/>
            <person name="Copeland A."/>
            <person name="Lapidus A."/>
            <person name="Glavina del Rio T."/>
            <person name="Dalin E."/>
            <person name="Tice H."/>
            <person name="Bruce D."/>
            <person name="Goodwin L."/>
            <person name="Pitluck S."/>
            <person name="Sims D."/>
            <person name="Brettin T."/>
            <person name="Detter J.C."/>
            <person name="Han C."/>
            <person name="Larimer F."/>
            <person name="Land M."/>
            <person name="Hauser L."/>
            <person name="Kyrpides N."/>
            <person name="Mikhailova N."/>
            <person name="Hazen T.C."/>
            <person name="Richardson P."/>
        </authorList>
    </citation>
    <scope>NUCLEOTIDE SEQUENCE [LARGE SCALE GENOMIC DNA]</scope>
    <source>
        <strain>DSM 19637 / Miyazaki F</strain>
    </source>
</reference>
<feature type="chain" id="PRO_1000191362" description="Large-conductance mechanosensitive channel">
    <location>
        <begin position="1"/>
        <end position="148"/>
    </location>
</feature>
<feature type="transmembrane region" description="Helical" evidence="1">
    <location>
        <begin position="15"/>
        <end position="35"/>
    </location>
</feature>
<feature type="transmembrane region" description="Helical" evidence="1">
    <location>
        <begin position="84"/>
        <end position="104"/>
    </location>
</feature>
<dbReference type="EMBL" id="CP001197">
    <property type="protein sequence ID" value="ACL09545.1"/>
    <property type="molecule type" value="Genomic_DNA"/>
</dbReference>
<dbReference type="STRING" id="883.DvMF_2606"/>
<dbReference type="KEGG" id="dvm:DvMF_2606"/>
<dbReference type="eggNOG" id="COG1970">
    <property type="taxonomic scope" value="Bacteria"/>
</dbReference>
<dbReference type="HOGENOM" id="CLU_095787_2_3_7"/>
<dbReference type="OrthoDB" id="9810350at2"/>
<dbReference type="GO" id="GO:0005886">
    <property type="term" value="C:plasma membrane"/>
    <property type="evidence" value="ECO:0007669"/>
    <property type="project" value="UniProtKB-SubCell"/>
</dbReference>
<dbReference type="GO" id="GO:0008381">
    <property type="term" value="F:mechanosensitive monoatomic ion channel activity"/>
    <property type="evidence" value="ECO:0007669"/>
    <property type="project" value="UniProtKB-UniRule"/>
</dbReference>
<dbReference type="Gene3D" id="1.10.1200.120">
    <property type="entry name" value="Large-conductance mechanosensitive channel, MscL, domain 1"/>
    <property type="match status" value="1"/>
</dbReference>
<dbReference type="HAMAP" id="MF_00115">
    <property type="entry name" value="MscL"/>
    <property type="match status" value="1"/>
</dbReference>
<dbReference type="InterPro" id="IPR001185">
    <property type="entry name" value="MS_channel"/>
</dbReference>
<dbReference type="InterPro" id="IPR037673">
    <property type="entry name" value="MSC/AndL"/>
</dbReference>
<dbReference type="InterPro" id="IPR036019">
    <property type="entry name" value="MscL_channel"/>
</dbReference>
<dbReference type="NCBIfam" id="TIGR00220">
    <property type="entry name" value="mscL"/>
    <property type="match status" value="1"/>
</dbReference>
<dbReference type="PANTHER" id="PTHR30266:SF2">
    <property type="entry name" value="LARGE-CONDUCTANCE MECHANOSENSITIVE CHANNEL"/>
    <property type="match status" value="1"/>
</dbReference>
<dbReference type="PANTHER" id="PTHR30266">
    <property type="entry name" value="MECHANOSENSITIVE CHANNEL MSCL"/>
    <property type="match status" value="1"/>
</dbReference>
<dbReference type="Pfam" id="PF01741">
    <property type="entry name" value="MscL"/>
    <property type="match status" value="1"/>
</dbReference>
<dbReference type="PRINTS" id="PR01264">
    <property type="entry name" value="MECHCHANNEL"/>
</dbReference>
<dbReference type="SUPFAM" id="SSF81330">
    <property type="entry name" value="Gated mechanosensitive channel"/>
    <property type="match status" value="1"/>
</dbReference>
<keyword id="KW-0997">Cell inner membrane</keyword>
<keyword id="KW-1003">Cell membrane</keyword>
<keyword id="KW-0407">Ion channel</keyword>
<keyword id="KW-0406">Ion transport</keyword>
<keyword id="KW-0472">Membrane</keyword>
<keyword id="KW-0812">Transmembrane</keyword>
<keyword id="KW-1133">Transmembrane helix</keyword>
<keyword id="KW-0813">Transport</keyword>
<protein>
    <recommendedName>
        <fullName evidence="1">Large-conductance mechanosensitive channel</fullName>
    </recommendedName>
</protein>
<gene>
    <name evidence="1" type="primary">mscL</name>
    <name type="ordered locus">DvMF_2606</name>
</gene>
<evidence type="ECO:0000255" key="1">
    <source>
        <dbReference type="HAMAP-Rule" id="MF_00115"/>
    </source>
</evidence>